<keyword id="KW-0687">Ribonucleoprotein</keyword>
<keyword id="KW-0689">Ribosomal protein</keyword>
<keyword id="KW-0694">RNA-binding</keyword>
<keyword id="KW-0699">rRNA-binding</keyword>
<comment type="function">
    <text evidence="1">Binds to the 23S rRNA.</text>
</comment>
<comment type="similarity">
    <text evidence="1">Belongs to the bacterial ribosomal protein bL9 family.</text>
</comment>
<sequence length="189" mass="20971">MEVILLERIGRLGQMGDTVKVKDGYARNFLLPQGKALRANEANKKKFEGQRAQLEAQNLERKNEAQAVADKLNGESFIVVRSAGETGQLYGSVSTRDIAEIITADGFTLHRNQVELNHPIKTIGLHEVSVSLHPEVQVKVMVNIARSTEEAERQAKGEDLTSIEAIYGIEEQPLSEEVFDDEDEAEDQA</sequence>
<organism>
    <name type="scientific">Brucella suis (strain ATCC 23445 / NCTC 10510)</name>
    <dbReference type="NCBI Taxonomy" id="470137"/>
    <lineage>
        <taxon>Bacteria</taxon>
        <taxon>Pseudomonadati</taxon>
        <taxon>Pseudomonadota</taxon>
        <taxon>Alphaproteobacteria</taxon>
        <taxon>Hyphomicrobiales</taxon>
        <taxon>Brucellaceae</taxon>
        <taxon>Brucella/Ochrobactrum group</taxon>
        <taxon>Brucella</taxon>
    </lineage>
</organism>
<gene>
    <name evidence="1" type="primary">rplI</name>
    <name type="ordered locus">BSUIS_A0478</name>
</gene>
<reference key="1">
    <citation type="submission" date="2007-12" db="EMBL/GenBank/DDBJ databases">
        <title>Brucella suis ATCC 23445 whole genome shotgun sequencing project.</title>
        <authorList>
            <person name="Setubal J.C."/>
            <person name="Bowns C."/>
            <person name="Boyle S."/>
            <person name="Crasta O.R."/>
            <person name="Czar M.J."/>
            <person name="Dharmanolla C."/>
            <person name="Gillespie J.J."/>
            <person name="Kenyon R.W."/>
            <person name="Lu J."/>
            <person name="Mane S."/>
            <person name="Mohapatra S."/>
            <person name="Nagrani S."/>
            <person name="Purkayastha A."/>
            <person name="Rajasimha H.K."/>
            <person name="Shallom J.M."/>
            <person name="Shallom S."/>
            <person name="Shukla M."/>
            <person name="Snyder E.E."/>
            <person name="Sobral B.W."/>
            <person name="Wattam A.R."/>
            <person name="Will R."/>
            <person name="Williams K."/>
            <person name="Yoo H."/>
            <person name="Bruce D."/>
            <person name="Detter C."/>
            <person name="Munk C."/>
            <person name="Brettin T.S."/>
        </authorList>
    </citation>
    <scope>NUCLEOTIDE SEQUENCE [LARGE SCALE GENOMIC DNA]</scope>
    <source>
        <strain>ATCC 23445 / NCTC 10510</strain>
    </source>
</reference>
<protein>
    <recommendedName>
        <fullName evidence="1">Large ribosomal subunit protein bL9</fullName>
    </recommendedName>
    <alternativeName>
        <fullName evidence="2">50S ribosomal protein L9</fullName>
    </alternativeName>
</protein>
<dbReference type="EMBL" id="CP000911">
    <property type="protein sequence ID" value="ABY37566.1"/>
    <property type="molecule type" value="Genomic_DNA"/>
</dbReference>
<dbReference type="RefSeq" id="WP_004691968.1">
    <property type="nucleotide sequence ID" value="NC_010169.1"/>
</dbReference>
<dbReference type="SMR" id="B0CKD6"/>
<dbReference type="GeneID" id="55590210"/>
<dbReference type="KEGG" id="bmt:BSUIS_A0478"/>
<dbReference type="HOGENOM" id="CLU_078938_1_0_5"/>
<dbReference type="Proteomes" id="UP000008545">
    <property type="component" value="Chromosome I"/>
</dbReference>
<dbReference type="GO" id="GO:1990904">
    <property type="term" value="C:ribonucleoprotein complex"/>
    <property type="evidence" value="ECO:0007669"/>
    <property type="project" value="UniProtKB-KW"/>
</dbReference>
<dbReference type="GO" id="GO:0005840">
    <property type="term" value="C:ribosome"/>
    <property type="evidence" value="ECO:0007669"/>
    <property type="project" value="UniProtKB-KW"/>
</dbReference>
<dbReference type="GO" id="GO:0019843">
    <property type="term" value="F:rRNA binding"/>
    <property type="evidence" value="ECO:0007669"/>
    <property type="project" value="UniProtKB-UniRule"/>
</dbReference>
<dbReference type="GO" id="GO:0003735">
    <property type="term" value="F:structural constituent of ribosome"/>
    <property type="evidence" value="ECO:0007669"/>
    <property type="project" value="InterPro"/>
</dbReference>
<dbReference type="GO" id="GO:0006412">
    <property type="term" value="P:translation"/>
    <property type="evidence" value="ECO:0007669"/>
    <property type="project" value="UniProtKB-UniRule"/>
</dbReference>
<dbReference type="Gene3D" id="3.10.430.100">
    <property type="entry name" value="Ribosomal protein L9, C-terminal domain"/>
    <property type="match status" value="1"/>
</dbReference>
<dbReference type="Gene3D" id="3.40.5.10">
    <property type="entry name" value="Ribosomal protein L9, N-terminal domain"/>
    <property type="match status" value="1"/>
</dbReference>
<dbReference type="HAMAP" id="MF_00503">
    <property type="entry name" value="Ribosomal_bL9"/>
    <property type="match status" value="1"/>
</dbReference>
<dbReference type="InterPro" id="IPR000244">
    <property type="entry name" value="Ribosomal_bL9"/>
</dbReference>
<dbReference type="InterPro" id="IPR009027">
    <property type="entry name" value="Ribosomal_bL9/RNase_H1_N"/>
</dbReference>
<dbReference type="InterPro" id="IPR020594">
    <property type="entry name" value="Ribosomal_bL9_bac/chp"/>
</dbReference>
<dbReference type="InterPro" id="IPR020069">
    <property type="entry name" value="Ribosomal_bL9_C"/>
</dbReference>
<dbReference type="InterPro" id="IPR036791">
    <property type="entry name" value="Ribosomal_bL9_C_sf"/>
</dbReference>
<dbReference type="InterPro" id="IPR020070">
    <property type="entry name" value="Ribosomal_bL9_N"/>
</dbReference>
<dbReference type="InterPro" id="IPR036935">
    <property type="entry name" value="Ribosomal_bL9_N_sf"/>
</dbReference>
<dbReference type="NCBIfam" id="TIGR00158">
    <property type="entry name" value="L9"/>
    <property type="match status" value="1"/>
</dbReference>
<dbReference type="PANTHER" id="PTHR21368">
    <property type="entry name" value="50S RIBOSOMAL PROTEIN L9"/>
    <property type="match status" value="1"/>
</dbReference>
<dbReference type="Pfam" id="PF03948">
    <property type="entry name" value="Ribosomal_L9_C"/>
    <property type="match status" value="1"/>
</dbReference>
<dbReference type="Pfam" id="PF01281">
    <property type="entry name" value="Ribosomal_L9_N"/>
    <property type="match status" value="1"/>
</dbReference>
<dbReference type="SUPFAM" id="SSF55658">
    <property type="entry name" value="L9 N-domain-like"/>
    <property type="match status" value="1"/>
</dbReference>
<dbReference type="SUPFAM" id="SSF55653">
    <property type="entry name" value="Ribosomal protein L9 C-domain"/>
    <property type="match status" value="1"/>
</dbReference>
<dbReference type="PROSITE" id="PS00651">
    <property type="entry name" value="RIBOSOMAL_L9"/>
    <property type="match status" value="1"/>
</dbReference>
<accession>B0CKD6</accession>
<evidence type="ECO:0000255" key="1">
    <source>
        <dbReference type="HAMAP-Rule" id="MF_00503"/>
    </source>
</evidence>
<evidence type="ECO:0000305" key="2"/>
<name>RL9_BRUSI</name>
<feature type="chain" id="PRO_1000081467" description="Large ribosomal subunit protein bL9">
    <location>
        <begin position="1"/>
        <end position="189"/>
    </location>
</feature>
<proteinExistence type="inferred from homology"/>